<feature type="chain" id="PRO_0000172709" description="Phosphatidylglycerol--prolipoprotein diacylglyceryl transferase">
    <location>
        <begin position="1"/>
        <end position="335"/>
    </location>
</feature>
<feature type="transmembrane region" description="Helical" evidence="1">
    <location>
        <begin position="31"/>
        <end position="51"/>
    </location>
</feature>
<feature type="transmembrane region" description="Helical" evidence="1">
    <location>
        <begin position="67"/>
        <end position="87"/>
    </location>
</feature>
<feature type="transmembrane region" description="Helical" evidence="1">
    <location>
        <begin position="100"/>
        <end position="120"/>
    </location>
</feature>
<feature type="transmembrane region" description="Helical" evidence="1">
    <location>
        <begin position="213"/>
        <end position="233"/>
    </location>
</feature>
<feature type="transmembrane region" description="Helical" evidence="1">
    <location>
        <begin position="235"/>
        <end position="255"/>
    </location>
</feature>
<feature type="transmembrane region" description="Helical" evidence="1">
    <location>
        <begin position="277"/>
        <end position="297"/>
    </location>
</feature>
<feature type="binding site" evidence="1">
    <location>
        <position position="163"/>
    </location>
    <ligand>
        <name>a 1,2-diacyl-sn-glycero-3-phospho-(1'-sn-glycerol)</name>
        <dbReference type="ChEBI" id="CHEBI:64716"/>
    </ligand>
</feature>
<evidence type="ECO:0000255" key="1">
    <source>
        <dbReference type="HAMAP-Rule" id="MF_01147"/>
    </source>
</evidence>
<dbReference type="EC" id="2.5.1.145" evidence="1"/>
<dbReference type="EMBL" id="AF222894">
    <property type="protein sequence ID" value="AAF30480.1"/>
    <property type="molecule type" value="Genomic_DNA"/>
</dbReference>
<dbReference type="RefSeq" id="WP_006688652.1">
    <property type="nucleotide sequence ID" value="NC_002162.1"/>
</dbReference>
<dbReference type="SMR" id="Q9PR70"/>
<dbReference type="STRING" id="273119.UU075"/>
<dbReference type="EnsemblBacteria" id="AAF30480">
    <property type="protein sequence ID" value="AAF30480"/>
    <property type="gene ID" value="UU075"/>
</dbReference>
<dbReference type="GeneID" id="29672166"/>
<dbReference type="KEGG" id="uur:UU075"/>
<dbReference type="eggNOG" id="COG0682">
    <property type="taxonomic scope" value="Bacteria"/>
</dbReference>
<dbReference type="HOGENOM" id="CLU_013386_0_2_14"/>
<dbReference type="OrthoDB" id="871140at2"/>
<dbReference type="UniPathway" id="UPA00664"/>
<dbReference type="Proteomes" id="UP000000423">
    <property type="component" value="Chromosome"/>
</dbReference>
<dbReference type="GO" id="GO:0005886">
    <property type="term" value="C:plasma membrane"/>
    <property type="evidence" value="ECO:0007669"/>
    <property type="project" value="UniProtKB-SubCell"/>
</dbReference>
<dbReference type="GO" id="GO:0008961">
    <property type="term" value="F:phosphatidylglycerol-prolipoprotein diacylglyceryl transferase activity"/>
    <property type="evidence" value="ECO:0007669"/>
    <property type="project" value="UniProtKB-UniRule"/>
</dbReference>
<dbReference type="GO" id="GO:0042158">
    <property type="term" value="P:lipoprotein biosynthetic process"/>
    <property type="evidence" value="ECO:0007669"/>
    <property type="project" value="UniProtKB-UniRule"/>
</dbReference>
<dbReference type="HAMAP" id="MF_01147">
    <property type="entry name" value="Lgt"/>
    <property type="match status" value="1"/>
</dbReference>
<dbReference type="InterPro" id="IPR001640">
    <property type="entry name" value="Lgt"/>
</dbReference>
<dbReference type="NCBIfam" id="TIGR00544">
    <property type="entry name" value="lgt"/>
    <property type="match status" value="1"/>
</dbReference>
<dbReference type="PANTHER" id="PTHR30589:SF0">
    <property type="entry name" value="PHOSPHATIDYLGLYCEROL--PROLIPOPROTEIN DIACYLGLYCERYL TRANSFERASE"/>
    <property type="match status" value="1"/>
</dbReference>
<dbReference type="PANTHER" id="PTHR30589">
    <property type="entry name" value="PROLIPOPROTEIN DIACYLGLYCERYL TRANSFERASE"/>
    <property type="match status" value="1"/>
</dbReference>
<dbReference type="Pfam" id="PF01790">
    <property type="entry name" value="LGT"/>
    <property type="match status" value="1"/>
</dbReference>
<dbReference type="PROSITE" id="PS01311">
    <property type="entry name" value="LGT"/>
    <property type="match status" value="1"/>
</dbReference>
<protein>
    <recommendedName>
        <fullName evidence="1">Phosphatidylglycerol--prolipoprotein diacylglyceryl transferase</fullName>
        <ecNumber evidence="1">2.5.1.145</ecNumber>
    </recommendedName>
</protein>
<accession>Q9PR70</accession>
<sequence length="335" mass="38546">MQLEIINPESTLVNDVVAHRVAFSIGSNFNIYWYGIIFVCGFLIAILTYSLRLKFHYKVPYDPGFYYIFLAIPMTIIGARLWSLAIGDAKDFFDFRSGGLAIQGGVIAGVLSAAVYFPLILRMPKYHIRDIDADGNVVIRQPSMWIYADAIIPTILIGQALGRWGNFINGEIFGAESTVNDLQWLKKAMPAVFEGMKHYFIEGNKTLFTIYQPLFLYESFFNVIVFVFIYFGLSYIKQLKIGFISMSYFFFYGVTRFSTESARAPQFSFEGTYIINSLLLIFGVLGALYVQFIAPLLRKKFLLDAIIEMFYKKKDQIHKFGELRKPEEFLFYCHK</sequence>
<proteinExistence type="inferred from homology"/>
<gene>
    <name evidence="1" type="primary">lgt</name>
    <name type="ordered locus">UU075</name>
</gene>
<keyword id="KW-1003">Cell membrane</keyword>
<keyword id="KW-0472">Membrane</keyword>
<keyword id="KW-1185">Reference proteome</keyword>
<keyword id="KW-0808">Transferase</keyword>
<keyword id="KW-0812">Transmembrane</keyword>
<keyword id="KW-1133">Transmembrane helix</keyword>
<comment type="function">
    <text evidence="1">Catalyzes the transfer of the diacylglyceryl group from phosphatidylglycerol to the sulfhydryl group of the N-terminal cysteine of a prolipoprotein, the first step in the formation of mature lipoproteins.</text>
</comment>
<comment type="catalytic activity">
    <reaction evidence="1">
        <text>L-cysteinyl-[prolipoprotein] + a 1,2-diacyl-sn-glycero-3-phospho-(1'-sn-glycerol) = an S-1,2-diacyl-sn-glyceryl-L-cysteinyl-[prolipoprotein] + sn-glycerol 1-phosphate + H(+)</text>
        <dbReference type="Rhea" id="RHEA:56712"/>
        <dbReference type="Rhea" id="RHEA-COMP:14679"/>
        <dbReference type="Rhea" id="RHEA-COMP:14680"/>
        <dbReference type="ChEBI" id="CHEBI:15378"/>
        <dbReference type="ChEBI" id="CHEBI:29950"/>
        <dbReference type="ChEBI" id="CHEBI:57685"/>
        <dbReference type="ChEBI" id="CHEBI:64716"/>
        <dbReference type="ChEBI" id="CHEBI:140658"/>
        <dbReference type="EC" id="2.5.1.145"/>
    </reaction>
</comment>
<comment type="pathway">
    <text evidence="1">Protein modification; lipoprotein biosynthesis (diacylglyceryl transfer).</text>
</comment>
<comment type="subcellular location">
    <subcellularLocation>
        <location evidence="1">Cell membrane</location>
        <topology evidence="1">Multi-pass membrane protein</topology>
    </subcellularLocation>
</comment>
<comment type="similarity">
    <text evidence="1">Belongs to the Lgt family.</text>
</comment>
<reference key="1">
    <citation type="journal article" date="2000" name="Nature">
        <title>The complete sequence of the mucosal pathogen Ureaplasma urealyticum.</title>
        <authorList>
            <person name="Glass J.I."/>
            <person name="Lefkowitz E.J."/>
            <person name="Glass J.S."/>
            <person name="Heiner C.R."/>
            <person name="Chen E.Y."/>
            <person name="Cassell G.H."/>
        </authorList>
    </citation>
    <scope>NUCLEOTIDE SEQUENCE [LARGE SCALE GENOMIC DNA]</scope>
    <source>
        <strain>ATCC 700970</strain>
    </source>
</reference>
<name>LGT_UREPA</name>
<organism>
    <name type="scientific">Ureaplasma parvum serovar 3 (strain ATCC 700970)</name>
    <dbReference type="NCBI Taxonomy" id="273119"/>
    <lineage>
        <taxon>Bacteria</taxon>
        <taxon>Bacillati</taxon>
        <taxon>Mycoplasmatota</taxon>
        <taxon>Mycoplasmoidales</taxon>
        <taxon>Mycoplasmoidaceae</taxon>
        <taxon>Ureaplasma</taxon>
    </lineage>
</organism>